<evidence type="ECO:0000250" key="1">
    <source>
        <dbReference type="UniProtKB" id="P02654"/>
    </source>
</evidence>
<evidence type="ECO:0000250" key="2">
    <source>
        <dbReference type="UniProtKB" id="P33047"/>
    </source>
</evidence>
<evidence type="ECO:0000250" key="3">
    <source>
        <dbReference type="UniProtKB" id="P86336"/>
    </source>
</evidence>
<evidence type="ECO:0000255" key="4"/>
<evidence type="ECO:0000305" key="5"/>
<sequence length="88" mass="9801">MRLFLSLPVLVVVLAMVLEGPAPAQAAPEISSTLERIPDKLKEFGNTLENKARAAIESIKQSDLPAKTRNWFSETFNKVKEQLKTTFS</sequence>
<keyword id="KW-0445">Lipid transport</keyword>
<keyword id="KW-0964">Secreted</keyword>
<keyword id="KW-0732">Signal</keyword>
<keyword id="KW-0813">Transport</keyword>
<keyword id="KW-0850">VLDL</keyword>
<proteinExistence type="inferred from homology"/>
<protein>
    <recommendedName>
        <fullName>Apolipoprotein C-I</fullName>
        <shortName>Apo-CI</shortName>
        <shortName>ApoC-I</shortName>
    </recommendedName>
    <alternativeName>
        <fullName>Apolipoprotein C1</fullName>
    </alternativeName>
    <component>
        <recommendedName>
            <fullName>Truncated apolipoprotein C-I</fullName>
        </recommendedName>
    </component>
</protein>
<accession>P0DTT4</accession>
<name>APOC1_EUMJU</name>
<comment type="function">
    <text evidence="1 2">Inhibitor of lipoprotein binding to the low density lipoprotein (LDL) receptor, LDL receptor-related protein, and very low density lipoprotein (VLDL) receptor. Associates with high density lipoproteins (HDL) and the triacylglycerol-rich lipoproteins in the plasma and makes up about 10% of the protein of the VLDL and 2% of that of HDL. Appears to interfere directly with fatty acid uptake and is also the major plasma inhibitor of cholesteryl ester transfer protein (CETP). Binds free fatty acids and reduces their intracellular esterification. Modulates the interaction of APOE with beta-migrating VLDL and inhibits binding of beta-VLDL to the LDL receptor-related protein.</text>
</comment>
<comment type="subcellular location">
    <subcellularLocation>
        <location evidence="1">Secreted</location>
    </subcellularLocation>
</comment>
<comment type="similarity">
    <text evidence="5">Belongs to the apolipoprotein C1 family.</text>
</comment>
<reference key="1">
    <citation type="journal article" date="2019" name="Genes (Basel)">
        <title>The Genome of the Steller Sea Lion (Eumetopias jubatus).</title>
        <authorList>
            <person name="Kwan H.H."/>
            <person name="Culibrk L."/>
            <person name="Taylor G.A."/>
            <person name="Leelakumari S."/>
            <person name="Tan R."/>
            <person name="Jackman S.D."/>
            <person name="Tse K."/>
            <person name="MacLeod T."/>
            <person name="Cheng D."/>
            <person name="Chuah E."/>
            <person name="Kirk H."/>
            <person name="Pandoh P."/>
            <person name="Carlsen R."/>
            <person name="Zhao Y."/>
            <person name="Mungall A.J."/>
            <person name="Moore R."/>
            <person name="Birol I."/>
            <person name="Marra M.A."/>
            <person name="Rosen D.A.S."/>
            <person name="Haulena M."/>
            <person name="Jones S.J.M."/>
        </authorList>
    </citation>
    <scope>NUCLEOTIDE SEQUENCE [LARGE SCALE GENOMIC DNA]</scope>
</reference>
<reference key="2">
    <citation type="unpublished observations" date="2019-12">
        <authorList>
            <person name="Puppione D.L."/>
        </authorList>
    </citation>
    <scope>IDENTIFICATION</scope>
</reference>
<gene>
    <name type="primary">APOC1</name>
</gene>
<feature type="signal peptide" evidence="4">
    <location>
        <begin position="1"/>
        <end position="26"/>
    </location>
</feature>
<feature type="chain" id="PRO_0000449201" description="Apolipoprotein C-I">
    <location>
        <begin position="27"/>
        <end position="88"/>
    </location>
</feature>
<feature type="chain" id="PRO_0000449202" description="Truncated apolipoprotein C-I" evidence="3">
    <location>
        <begin position="29"/>
        <end position="88"/>
    </location>
</feature>
<organism>
    <name type="scientific">Eumetopias jubatus</name>
    <name type="common">Steller sea lion</name>
    <name type="synonym">Phoca jubata</name>
    <dbReference type="NCBI Taxonomy" id="34886"/>
    <lineage>
        <taxon>Eukaryota</taxon>
        <taxon>Metazoa</taxon>
        <taxon>Chordata</taxon>
        <taxon>Craniata</taxon>
        <taxon>Vertebrata</taxon>
        <taxon>Euteleostomi</taxon>
        <taxon>Mammalia</taxon>
        <taxon>Eutheria</taxon>
        <taxon>Laurasiatheria</taxon>
        <taxon>Carnivora</taxon>
        <taxon>Caniformia</taxon>
        <taxon>Pinnipedia</taxon>
        <taxon>Otariidae</taxon>
        <taxon>Eumetopias</taxon>
    </lineage>
</organism>
<dbReference type="SMR" id="P0DTT4"/>
<dbReference type="GO" id="GO:0034364">
    <property type="term" value="C:high-density lipoprotein particle"/>
    <property type="evidence" value="ECO:0007669"/>
    <property type="project" value="TreeGrafter"/>
</dbReference>
<dbReference type="GO" id="GO:0034361">
    <property type="term" value="C:very-low-density lipoprotein particle"/>
    <property type="evidence" value="ECO:0007669"/>
    <property type="project" value="UniProtKB-KW"/>
</dbReference>
<dbReference type="GO" id="GO:0005504">
    <property type="term" value="F:fatty acid binding"/>
    <property type="evidence" value="ECO:0007669"/>
    <property type="project" value="TreeGrafter"/>
</dbReference>
<dbReference type="GO" id="GO:0004859">
    <property type="term" value="F:phospholipase inhibitor activity"/>
    <property type="evidence" value="ECO:0007669"/>
    <property type="project" value="TreeGrafter"/>
</dbReference>
<dbReference type="GO" id="GO:0006869">
    <property type="term" value="P:lipid transport"/>
    <property type="evidence" value="ECO:0007669"/>
    <property type="project" value="UniProtKB-KW"/>
</dbReference>
<dbReference type="GO" id="GO:0042157">
    <property type="term" value="P:lipoprotein metabolic process"/>
    <property type="evidence" value="ECO:0007669"/>
    <property type="project" value="InterPro"/>
</dbReference>
<dbReference type="GO" id="GO:0032375">
    <property type="term" value="P:negative regulation of cholesterol transport"/>
    <property type="evidence" value="ECO:0007669"/>
    <property type="project" value="TreeGrafter"/>
</dbReference>
<dbReference type="GO" id="GO:0050995">
    <property type="term" value="P:negative regulation of lipid catabolic process"/>
    <property type="evidence" value="ECO:0007669"/>
    <property type="project" value="TreeGrafter"/>
</dbReference>
<dbReference type="GO" id="GO:0010916">
    <property type="term" value="P:negative regulation of very-low-density lipoprotein particle clearance"/>
    <property type="evidence" value="ECO:0007669"/>
    <property type="project" value="TreeGrafter"/>
</dbReference>
<dbReference type="GO" id="GO:0006641">
    <property type="term" value="P:triglyceride metabolic process"/>
    <property type="evidence" value="ECO:0007669"/>
    <property type="project" value="TreeGrafter"/>
</dbReference>
<dbReference type="GO" id="GO:0034447">
    <property type="term" value="P:very-low-density lipoprotein particle clearance"/>
    <property type="evidence" value="ECO:0007669"/>
    <property type="project" value="TreeGrafter"/>
</dbReference>
<dbReference type="Gene3D" id="4.10.260.30">
    <property type="entry name" value="Apolipoprotein C-I"/>
    <property type="match status" value="1"/>
</dbReference>
<dbReference type="InterPro" id="IPR043081">
    <property type="entry name" value="ApoC-1_sf"/>
</dbReference>
<dbReference type="InterPro" id="IPR006781">
    <property type="entry name" value="ApoC-I"/>
</dbReference>
<dbReference type="PANTHER" id="PTHR16565">
    <property type="entry name" value="APOLIPOPROTEIN C-I"/>
    <property type="match status" value="1"/>
</dbReference>
<dbReference type="PANTHER" id="PTHR16565:SF2">
    <property type="entry name" value="APOLIPOPROTEIN C-I"/>
    <property type="match status" value="1"/>
</dbReference>
<dbReference type="Pfam" id="PF04691">
    <property type="entry name" value="ApoC-I"/>
    <property type="match status" value="1"/>
</dbReference>